<proteinExistence type="evidence at protein level"/>
<accession>Q9CQ92</accession>
<reference key="1">
    <citation type="journal article" date="2005" name="Science">
        <title>The transcriptional landscape of the mammalian genome.</title>
        <authorList>
            <person name="Carninci P."/>
            <person name="Kasukawa T."/>
            <person name="Katayama S."/>
            <person name="Gough J."/>
            <person name="Frith M.C."/>
            <person name="Maeda N."/>
            <person name="Oyama R."/>
            <person name="Ravasi T."/>
            <person name="Lenhard B."/>
            <person name="Wells C."/>
            <person name="Kodzius R."/>
            <person name="Shimokawa K."/>
            <person name="Bajic V.B."/>
            <person name="Brenner S.E."/>
            <person name="Batalov S."/>
            <person name="Forrest A.R."/>
            <person name="Zavolan M."/>
            <person name="Davis M.J."/>
            <person name="Wilming L.G."/>
            <person name="Aidinis V."/>
            <person name="Allen J.E."/>
            <person name="Ambesi-Impiombato A."/>
            <person name="Apweiler R."/>
            <person name="Aturaliya R.N."/>
            <person name="Bailey T.L."/>
            <person name="Bansal M."/>
            <person name="Baxter L."/>
            <person name="Beisel K.W."/>
            <person name="Bersano T."/>
            <person name="Bono H."/>
            <person name="Chalk A.M."/>
            <person name="Chiu K.P."/>
            <person name="Choudhary V."/>
            <person name="Christoffels A."/>
            <person name="Clutterbuck D.R."/>
            <person name="Crowe M.L."/>
            <person name="Dalla E."/>
            <person name="Dalrymple B.P."/>
            <person name="de Bono B."/>
            <person name="Della Gatta G."/>
            <person name="di Bernardo D."/>
            <person name="Down T."/>
            <person name="Engstrom P."/>
            <person name="Fagiolini M."/>
            <person name="Faulkner G."/>
            <person name="Fletcher C.F."/>
            <person name="Fukushima T."/>
            <person name="Furuno M."/>
            <person name="Futaki S."/>
            <person name="Gariboldi M."/>
            <person name="Georgii-Hemming P."/>
            <person name="Gingeras T.R."/>
            <person name="Gojobori T."/>
            <person name="Green R.E."/>
            <person name="Gustincich S."/>
            <person name="Harbers M."/>
            <person name="Hayashi Y."/>
            <person name="Hensch T.K."/>
            <person name="Hirokawa N."/>
            <person name="Hill D."/>
            <person name="Huminiecki L."/>
            <person name="Iacono M."/>
            <person name="Ikeo K."/>
            <person name="Iwama A."/>
            <person name="Ishikawa T."/>
            <person name="Jakt M."/>
            <person name="Kanapin A."/>
            <person name="Katoh M."/>
            <person name="Kawasawa Y."/>
            <person name="Kelso J."/>
            <person name="Kitamura H."/>
            <person name="Kitano H."/>
            <person name="Kollias G."/>
            <person name="Krishnan S.P."/>
            <person name="Kruger A."/>
            <person name="Kummerfeld S.K."/>
            <person name="Kurochkin I.V."/>
            <person name="Lareau L.F."/>
            <person name="Lazarevic D."/>
            <person name="Lipovich L."/>
            <person name="Liu J."/>
            <person name="Liuni S."/>
            <person name="McWilliam S."/>
            <person name="Madan Babu M."/>
            <person name="Madera M."/>
            <person name="Marchionni L."/>
            <person name="Matsuda H."/>
            <person name="Matsuzawa S."/>
            <person name="Miki H."/>
            <person name="Mignone F."/>
            <person name="Miyake S."/>
            <person name="Morris K."/>
            <person name="Mottagui-Tabar S."/>
            <person name="Mulder N."/>
            <person name="Nakano N."/>
            <person name="Nakauchi H."/>
            <person name="Ng P."/>
            <person name="Nilsson R."/>
            <person name="Nishiguchi S."/>
            <person name="Nishikawa S."/>
            <person name="Nori F."/>
            <person name="Ohara O."/>
            <person name="Okazaki Y."/>
            <person name="Orlando V."/>
            <person name="Pang K.C."/>
            <person name="Pavan W.J."/>
            <person name="Pavesi G."/>
            <person name="Pesole G."/>
            <person name="Petrovsky N."/>
            <person name="Piazza S."/>
            <person name="Reed J."/>
            <person name="Reid J.F."/>
            <person name="Ring B.Z."/>
            <person name="Ringwald M."/>
            <person name="Rost B."/>
            <person name="Ruan Y."/>
            <person name="Salzberg S.L."/>
            <person name="Sandelin A."/>
            <person name="Schneider C."/>
            <person name="Schoenbach C."/>
            <person name="Sekiguchi K."/>
            <person name="Semple C.A."/>
            <person name="Seno S."/>
            <person name="Sessa L."/>
            <person name="Sheng Y."/>
            <person name="Shibata Y."/>
            <person name="Shimada H."/>
            <person name="Shimada K."/>
            <person name="Silva D."/>
            <person name="Sinclair B."/>
            <person name="Sperling S."/>
            <person name="Stupka E."/>
            <person name="Sugiura K."/>
            <person name="Sultana R."/>
            <person name="Takenaka Y."/>
            <person name="Taki K."/>
            <person name="Tammoja K."/>
            <person name="Tan S.L."/>
            <person name="Tang S."/>
            <person name="Taylor M.S."/>
            <person name="Tegner J."/>
            <person name="Teichmann S.A."/>
            <person name="Ueda H.R."/>
            <person name="van Nimwegen E."/>
            <person name="Verardo R."/>
            <person name="Wei C.L."/>
            <person name="Yagi K."/>
            <person name="Yamanishi H."/>
            <person name="Zabarovsky E."/>
            <person name="Zhu S."/>
            <person name="Zimmer A."/>
            <person name="Hide W."/>
            <person name="Bult C."/>
            <person name="Grimmond S.M."/>
            <person name="Teasdale R.D."/>
            <person name="Liu E.T."/>
            <person name="Brusic V."/>
            <person name="Quackenbush J."/>
            <person name="Wahlestedt C."/>
            <person name="Mattick J.S."/>
            <person name="Hume D.A."/>
            <person name="Kai C."/>
            <person name="Sasaki D."/>
            <person name="Tomaru Y."/>
            <person name="Fukuda S."/>
            <person name="Kanamori-Katayama M."/>
            <person name="Suzuki M."/>
            <person name="Aoki J."/>
            <person name="Arakawa T."/>
            <person name="Iida J."/>
            <person name="Imamura K."/>
            <person name="Itoh M."/>
            <person name="Kato T."/>
            <person name="Kawaji H."/>
            <person name="Kawagashira N."/>
            <person name="Kawashima T."/>
            <person name="Kojima M."/>
            <person name="Kondo S."/>
            <person name="Konno H."/>
            <person name="Nakano K."/>
            <person name="Ninomiya N."/>
            <person name="Nishio T."/>
            <person name="Okada M."/>
            <person name="Plessy C."/>
            <person name="Shibata K."/>
            <person name="Shiraki T."/>
            <person name="Suzuki S."/>
            <person name="Tagami M."/>
            <person name="Waki K."/>
            <person name="Watahiki A."/>
            <person name="Okamura-Oho Y."/>
            <person name="Suzuki H."/>
            <person name="Kawai J."/>
            <person name="Hayashizaki Y."/>
        </authorList>
    </citation>
    <scope>NUCLEOTIDE SEQUENCE [LARGE SCALE MRNA]</scope>
    <source>
        <strain>C57BL/6J</strain>
        <tissue>Embryo</tissue>
        <tissue>Liver</tissue>
        <tissue>Small intestine</tissue>
        <tissue>Stomach</tissue>
    </source>
</reference>
<reference key="2">
    <citation type="journal article" date="2004" name="Genome Res.">
        <title>The status, quality, and expansion of the NIH full-length cDNA project: the Mammalian Gene Collection (MGC).</title>
        <authorList>
            <consortium name="The MGC Project Team"/>
        </authorList>
    </citation>
    <scope>NUCLEOTIDE SEQUENCE [LARGE SCALE MRNA]</scope>
    <source>
        <tissue>Kidney</tissue>
    </source>
</reference>
<reference key="3">
    <citation type="submission" date="2007-04" db="UniProtKB">
        <authorList>
            <person name="Lubec G."/>
            <person name="Klug S."/>
            <person name="Kang S.U."/>
        </authorList>
    </citation>
    <scope>PROTEIN SEQUENCE OF 20-32; 54-64; 72-83 AND 96-108</scope>
    <scope>IDENTIFICATION BY MASS SPECTROMETRY</scope>
    <source>
        <strain>C57BL/6J</strain>
        <tissue>Brain</tissue>
        <tissue>Hippocampus</tissue>
    </source>
</reference>
<reference key="4">
    <citation type="journal article" date="2010" name="Cell">
        <title>A tissue-specific atlas of mouse protein phosphorylation and expression.</title>
        <authorList>
            <person name="Huttlin E.L."/>
            <person name="Jedrychowski M.P."/>
            <person name="Elias J.E."/>
            <person name="Goswami T."/>
            <person name="Rad R."/>
            <person name="Beausoleil S.A."/>
            <person name="Villen J."/>
            <person name="Haas W."/>
            <person name="Sowa M.E."/>
            <person name="Gygi S.P."/>
        </authorList>
    </citation>
    <scope>IDENTIFICATION BY MASS SPECTROMETRY [LARGE SCALE ANALYSIS]</scope>
    <source>
        <tissue>Brain</tissue>
        <tissue>Brown adipose tissue</tissue>
        <tissue>Heart</tissue>
        <tissue>Kidney</tissue>
        <tissue>Liver</tissue>
        <tissue>Lung</tissue>
        <tissue>Pancreas</tissue>
        <tissue>Spleen</tissue>
        <tissue>Testis</tissue>
    </source>
</reference>
<reference key="5">
    <citation type="journal article" date="2013" name="Mol. Biol. Cell">
        <title>Fis1, Mff, MiD49, and MiD51 mediate Drp1 recruitment in mitochondrial fission.</title>
        <authorList>
            <person name="Loson O.C."/>
            <person name="Song Z."/>
            <person name="Chen H."/>
            <person name="Chan D.C."/>
        </authorList>
    </citation>
    <scope>FUNCTION</scope>
</reference>
<reference key="6">
    <citation type="submission" date="2002-08" db="PDB data bank">
        <title>Solution structure of RSGI RUH-001, a FIS1p-like and CGI-135 homologous domain from a mouse cDNA.</title>
        <authorList>
            <consortium name="RIKEN structural genomics initiative (RSGI)"/>
        </authorList>
    </citation>
    <scope>STRUCTURE BY NMR</scope>
</reference>
<dbReference type="EMBL" id="AK004479">
    <property type="protein sequence ID" value="BAB23324.1"/>
    <property type="molecule type" value="mRNA"/>
</dbReference>
<dbReference type="EMBL" id="AK004917">
    <property type="protein sequence ID" value="BAB23668.1"/>
    <property type="molecule type" value="mRNA"/>
</dbReference>
<dbReference type="EMBL" id="AK008078">
    <property type="protein sequence ID" value="BAB25445.1"/>
    <property type="molecule type" value="mRNA"/>
</dbReference>
<dbReference type="EMBL" id="AK008323">
    <property type="protein sequence ID" value="BAB25601.1"/>
    <property type="molecule type" value="mRNA"/>
</dbReference>
<dbReference type="EMBL" id="AK008916">
    <property type="protein sequence ID" value="BAB25966.1"/>
    <property type="molecule type" value="mRNA"/>
</dbReference>
<dbReference type="EMBL" id="BC010783">
    <property type="protein sequence ID" value="AAH10783.1"/>
    <property type="molecule type" value="mRNA"/>
</dbReference>
<dbReference type="CCDS" id="CCDS19757.1"/>
<dbReference type="RefSeq" id="NP_001156715.1">
    <property type="nucleotide sequence ID" value="NM_001163243.1"/>
</dbReference>
<dbReference type="RefSeq" id="NP_079838.1">
    <property type="nucleotide sequence ID" value="NM_025562.3"/>
</dbReference>
<dbReference type="PDB" id="1IYG">
    <property type="method" value="NMR"/>
    <property type="chains" value="A=1-120"/>
</dbReference>
<dbReference type="PDBsum" id="1IYG"/>
<dbReference type="SMR" id="Q9CQ92"/>
<dbReference type="BioGRID" id="211472">
    <property type="interactions" value="15"/>
</dbReference>
<dbReference type="FunCoup" id="Q9CQ92">
    <property type="interactions" value="2274"/>
</dbReference>
<dbReference type="IntAct" id="Q9CQ92">
    <property type="interactions" value="2"/>
</dbReference>
<dbReference type="MINT" id="Q9CQ92"/>
<dbReference type="STRING" id="10090.ENSMUSP00000019198"/>
<dbReference type="GlyGen" id="Q9CQ92">
    <property type="glycosylation" value="1 site, 1 O-linked glycan (1 site)"/>
</dbReference>
<dbReference type="iPTMnet" id="Q9CQ92"/>
<dbReference type="PhosphoSitePlus" id="Q9CQ92"/>
<dbReference type="SwissPalm" id="Q9CQ92"/>
<dbReference type="jPOST" id="Q9CQ92"/>
<dbReference type="PaxDb" id="10090-ENSMUSP00000019198"/>
<dbReference type="PeptideAtlas" id="Q9CQ92"/>
<dbReference type="ProteomicsDB" id="267589"/>
<dbReference type="Pumba" id="Q9CQ92"/>
<dbReference type="TopDownProteomics" id="Q9CQ92"/>
<dbReference type="DNASU" id="66437"/>
<dbReference type="Ensembl" id="ENSMUST00000019198.7">
    <property type="protein sequence ID" value="ENSMUSP00000019198.7"/>
    <property type="gene ID" value="ENSMUSG00000019054.14"/>
</dbReference>
<dbReference type="GeneID" id="66437"/>
<dbReference type="KEGG" id="mmu:66437"/>
<dbReference type="UCSC" id="uc009abf.2">
    <property type="organism name" value="mouse"/>
</dbReference>
<dbReference type="AGR" id="MGI:1913687"/>
<dbReference type="CTD" id="51024"/>
<dbReference type="MGI" id="MGI:1913687">
    <property type="gene designation" value="Fis1"/>
</dbReference>
<dbReference type="VEuPathDB" id="HostDB:ENSMUSG00000019054"/>
<dbReference type="eggNOG" id="KOG3364">
    <property type="taxonomic scope" value="Eukaryota"/>
</dbReference>
<dbReference type="GeneTree" id="ENSGT00390000000592"/>
<dbReference type="HOGENOM" id="CLU_104368_1_0_1"/>
<dbReference type="InParanoid" id="Q9CQ92"/>
<dbReference type="OMA" id="QFNYAWG"/>
<dbReference type="OrthoDB" id="421154at2759"/>
<dbReference type="PhylomeDB" id="Q9CQ92"/>
<dbReference type="TreeFam" id="TF315180"/>
<dbReference type="Reactome" id="R-MMU-9603798">
    <property type="pathway name" value="Class I peroxisomal membrane protein import"/>
</dbReference>
<dbReference type="BioGRID-ORCS" id="66437">
    <property type="hits" value="12 hits in 77 CRISPR screens"/>
</dbReference>
<dbReference type="ChiTaRS" id="Fis1">
    <property type="organism name" value="mouse"/>
</dbReference>
<dbReference type="EvolutionaryTrace" id="Q9CQ92"/>
<dbReference type="PRO" id="PR:Q9CQ92"/>
<dbReference type="Proteomes" id="UP000000589">
    <property type="component" value="Chromosome 5"/>
</dbReference>
<dbReference type="RNAct" id="Q9CQ92">
    <property type="molecule type" value="protein"/>
</dbReference>
<dbReference type="Bgee" id="ENSMUSG00000019054">
    <property type="expression patterns" value="Expressed in dorsal pancreas and 248 other cell types or tissues"/>
</dbReference>
<dbReference type="ExpressionAtlas" id="Q9CQ92">
    <property type="expression patterns" value="baseline and differential"/>
</dbReference>
<dbReference type="GO" id="GO:0005741">
    <property type="term" value="C:mitochondrial outer membrane"/>
    <property type="evidence" value="ECO:0000250"/>
    <property type="project" value="UniProtKB"/>
</dbReference>
<dbReference type="GO" id="GO:0005739">
    <property type="term" value="C:mitochondrion"/>
    <property type="evidence" value="ECO:0000314"/>
    <property type="project" value="MGI"/>
</dbReference>
<dbReference type="GO" id="GO:0005778">
    <property type="term" value="C:peroxisomal membrane"/>
    <property type="evidence" value="ECO:0000250"/>
    <property type="project" value="UniProtKB"/>
</dbReference>
<dbReference type="GO" id="GO:0005777">
    <property type="term" value="C:peroxisome"/>
    <property type="evidence" value="ECO:0000250"/>
    <property type="project" value="UniProtKB"/>
</dbReference>
<dbReference type="GO" id="GO:0032991">
    <property type="term" value="C:protein-containing complex"/>
    <property type="evidence" value="ECO:0007669"/>
    <property type="project" value="Ensembl"/>
</dbReference>
<dbReference type="GO" id="GO:0042802">
    <property type="term" value="F:identical protein binding"/>
    <property type="evidence" value="ECO:0007669"/>
    <property type="project" value="Ensembl"/>
</dbReference>
<dbReference type="GO" id="GO:0006915">
    <property type="term" value="P:apoptotic process"/>
    <property type="evidence" value="ECO:0007669"/>
    <property type="project" value="UniProtKB-KW"/>
</dbReference>
<dbReference type="GO" id="GO:0000266">
    <property type="term" value="P:mitochondrial fission"/>
    <property type="evidence" value="ECO:0000315"/>
    <property type="project" value="UniProtKB"/>
</dbReference>
<dbReference type="GO" id="GO:0007005">
    <property type="term" value="P:mitochondrion organization"/>
    <property type="evidence" value="ECO:0000266"/>
    <property type="project" value="MGI"/>
</dbReference>
<dbReference type="GO" id="GO:1903579">
    <property type="term" value="P:negative regulation of ATP metabolic process"/>
    <property type="evidence" value="ECO:0007669"/>
    <property type="project" value="Ensembl"/>
</dbReference>
<dbReference type="GO" id="GO:2000192">
    <property type="term" value="P:negative regulation of fatty acid transport"/>
    <property type="evidence" value="ECO:0007669"/>
    <property type="project" value="Ensembl"/>
</dbReference>
<dbReference type="GO" id="GO:0016559">
    <property type="term" value="P:peroxisome fission"/>
    <property type="evidence" value="ECO:0000250"/>
    <property type="project" value="UniProtKB"/>
</dbReference>
<dbReference type="GO" id="GO:2001244">
    <property type="term" value="P:positive regulation of intrinsic apoptotic signaling pathway"/>
    <property type="evidence" value="ECO:0007669"/>
    <property type="project" value="Ensembl"/>
</dbReference>
<dbReference type="GO" id="GO:0006626">
    <property type="term" value="P:protein targeting to mitochondrion"/>
    <property type="evidence" value="ECO:0007669"/>
    <property type="project" value="Ensembl"/>
</dbReference>
<dbReference type="CDD" id="cd12212">
    <property type="entry name" value="Fis1"/>
    <property type="match status" value="1"/>
</dbReference>
<dbReference type="FunFam" id="1.25.40.10:FF:000147">
    <property type="entry name" value="Mitochondrial fission 1 protein"/>
    <property type="match status" value="1"/>
</dbReference>
<dbReference type="Gene3D" id="1.25.40.10">
    <property type="entry name" value="Tetratricopeptide repeat domain"/>
    <property type="match status" value="1"/>
</dbReference>
<dbReference type="InterPro" id="IPR016543">
    <property type="entry name" value="Fis1"/>
</dbReference>
<dbReference type="InterPro" id="IPR033745">
    <property type="entry name" value="Fis1_cytosol"/>
</dbReference>
<dbReference type="InterPro" id="IPR028061">
    <property type="entry name" value="Fis1_TPR_C"/>
</dbReference>
<dbReference type="InterPro" id="IPR028058">
    <property type="entry name" value="Fis1_TPR_N"/>
</dbReference>
<dbReference type="InterPro" id="IPR011990">
    <property type="entry name" value="TPR-like_helical_dom_sf"/>
</dbReference>
<dbReference type="PANTHER" id="PTHR13247:SF0">
    <property type="entry name" value="MITOCHONDRIAL FISSION 1 PROTEIN"/>
    <property type="match status" value="1"/>
</dbReference>
<dbReference type="PANTHER" id="PTHR13247">
    <property type="entry name" value="TETRATRICOPEPTIDE REPEAT PROTEIN 11 TPR REPEAT PROTEIN 11"/>
    <property type="match status" value="1"/>
</dbReference>
<dbReference type="Pfam" id="PF14853">
    <property type="entry name" value="Fis1_TPR_C"/>
    <property type="match status" value="1"/>
</dbReference>
<dbReference type="Pfam" id="PF14852">
    <property type="entry name" value="Fis1_TPR_N"/>
    <property type="match status" value="1"/>
</dbReference>
<dbReference type="PIRSF" id="PIRSF008835">
    <property type="entry name" value="TPR_repeat_11_Fis1"/>
    <property type="match status" value="1"/>
</dbReference>
<dbReference type="SUPFAM" id="SSF48452">
    <property type="entry name" value="TPR-like"/>
    <property type="match status" value="1"/>
</dbReference>
<organism>
    <name type="scientific">Mus musculus</name>
    <name type="common">Mouse</name>
    <dbReference type="NCBI Taxonomy" id="10090"/>
    <lineage>
        <taxon>Eukaryota</taxon>
        <taxon>Metazoa</taxon>
        <taxon>Chordata</taxon>
        <taxon>Craniata</taxon>
        <taxon>Vertebrata</taxon>
        <taxon>Euteleostomi</taxon>
        <taxon>Mammalia</taxon>
        <taxon>Eutheria</taxon>
        <taxon>Euarchontoglires</taxon>
        <taxon>Glires</taxon>
        <taxon>Rodentia</taxon>
        <taxon>Myomorpha</taxon>
        <taxon>Muroidea</taxon>
        <taxon>Muridae</taxon>
        <taxon>Murinae</taxon>
        <taxon>Mus</taxon>
        <taxon>Mus</taxon>
    </lineage>
</organism>
<sequence length="152" mass="17009">MEAVLNELVSVEDLKNFERKFQSEQAAGSVSKSTQFEYAWCLVRSKYNEDIRRGIVLLEELLPKGSKEEQRDYVFYLAVGNYRLKEYEKALKYVRGLLQTEPQNNQAKELERLIDKAMKKDGLVGMAIVGGMALGVAGLAGLIGLAVSKSKS</sequence>
<evidence type="ECO:0000250" key="1">
    <source>
        <dbReference type="UniProtKB" id="Q9Y3D6"/>
    </source>
</evidence>
<evidence type="ECO:0000255" key="2"/>
<evidence type="ECO:0000269" key="3">
    <source>
    </source>
</evidence>
<evidence type="ECO:0000305" key="4"/>
<evidence type="ECO:0007829" key="5">
    <source>
        <dbReference type="PDB" id="1IYG"/>
    </source>
</evidence>
<keyword id="KW-0002">3D-structure</keyword>
<keyword id="KW-0007">Acetylation</keyword>
<keyword id="KW-0053">Apoptosis</keyword>
<keyword id="KW-0903">Direct protein sequencing</keyword>
<keyword id="KW-0472">Membrane</keyword>
<keyword id="KW-0496">Mitochondrion</keyword>
<keyword id="KW-1000">Mitochondrion outer membrane</keyword>
<keyword id="KW-0576">Peroxisome</keyword>
<keyword id="KW-0597">Phosphoprotein</keyword>
<keyword id="KW-1185">Reference proteome</keyword>
<keyword id="KW-0802">TPR repeat</keyword>
<keyword id="KW-0812">Transmembrane</keyword>
<keyword id="KW-1133">Transmembrane helix</keyword>
<keyword id="KW-0832">Ubl conjugation</keyword>
<feature type="chain" id="PRO_0000106394" description="Mitochondrial fission 1 protein">
    <location>
        <begin position="1"/>
        <end position="152"/>
    </location>
</feature>
<feature type="topological domain" description="Cytoplasmic" evidence="2">
    <location>
        <begin position="1"/>
        <end position="122"/>
    </location>
</feature>
<feature type="transmembrane region" description="Helical" evidence="2">
    <location>
        <begin position="123"/>
        <end position="143"/>
    </location>
</feature>
<feature type="topological domain" description="Mitochondrial intermembrane" evidence="2">
    <location>
        <begin position="144"/>
        <end position="152"/>
    </location>
</feature>
<feature type="repeat" description="TPR">
    <location>
        <begin position="71"/>
        <end position="104"/>
    </location>
</feature>
<feature type="modified residue" description="N-acetylmethionine" evidence="1">
    <location>
        <position position="1"/>
    </location>
</feature>
<feature type="modified residue" description="Phosphoserine" evidence="1">
    <location>
        <position position="10"/>
    </location>
</feature>
<feature type="helix" evidence="5">
    <location>
        <begin position="2"/>
        <end position="6"/>
    </location>
</feature>
<feature type="helix" evidence="5">
    <location>
        <begin position="11"/>
        <end position="27"/>
    </location>
</feature>
<feature type="helix" evidence="5">
    <location>
        <begin position="32"/>
        <end position="44"/>
    </location>
</feature>
<feature type="strand" evidence="5">
    <location>
        <begin position="45"/>
        <end position="47"/>
    </location>
</feature>
<feature type="helix" evidence="5">
    <location>
        <begin position="48"/>
        <end position="61"/>
    </location>
</feature>
<feature type="helix" evidence="5">
    <location>
        <begin position="68"/>
        <end position="83"/>
    </location>
</feature>
<feature type="helix" evidence="5">
    <location>
        <begin position="87"/>
        <end position="100"/>
    </location>
</feature>
<feature type="helix" evidence="5">
    <location>
        <begin position="105"/>
        <end position="120"/>
    </location>
</feature>
<name>FIS1_MOUSE</name>
<protein>
    <recommendedName>
        <fullName>Mitochondrial fission 1 protein</fullName>
    </recommendedName>
    <alternativeName>
        <fullName>FIS1 homolog</fullName>
    </alternativeName>
    <alternativeName>
        <fullName>Tetratricopeptide repeat protein 11</fullName>
        <shortName>TPR repeat protein 11</shortName>
    </alternativeName>
</protein>
<gene>
    <name type="primary">Fis1</name>
    <name type="synonym">Ttc11</name>
</gene>
<comment type="function">
    <text evidence="1 3">Involved in the fragmentation of the mitochondrial network and its perinuclear clustering (PubMed:23283981). Plays a minor role in the recruitment and association of the fission mediator dynamin-related protein 1 (DNM1L) to the mitochondrial surface and mitochondrial fission (PubMed:23283981). May not be essential for the assembly of functional fission complexes and the subsequent membrane scission event (By similarity). Also mediates peroxisomal fission (By similarity). May act when the products of fission are directed toward mitochondrial homeostasis, mitophagy, or apoptosis (By similarity). Can induce cytochrome c release from the mitochondrion to the cytosol, ultimately leading to apoptosis (By similarity).</text>
</comment>
<comment type="subunit">
    <text evidence="1">Interacts with DNM1L/DLP1 through the TPR region; may form part of a larger protein complex at the endoplasmic reticulum-mitochondrial interface during mitochondrial fission (By similarity). Interacts with MARCHF5 (By similarity). Interacts with MIEF1 (By similarity). Interacts with PEX11A, PEX11B and PEX11G (By similarity).</text>
</comment>
<comment type="subcellular location">
    <subcellularLocation>
        <location evidence="1">Mitochondrion outer membrane</location>
        <topology evidence="1">Single-pass membrane protein</topology>
    </subcellularLocation>
    <subcellularLocation>
        <location evidence="1">Peroxisome membrane</location>
        <topology evidence="1">Single-pass membrane protein</topology>
    </subcellularLocation>
</comment>
<comment type="domain">
    <text evidence="1">The C-terminus is required for mitochondrial or peroxisomal localization, while the N-terminus is necessary for mitochondrial or peroxisomal fission, localization and regulation of the interaction with DNM1L.</text>
</comment>
<comment type="PTM">
    <text evidence="1">Ubiquitinated by MARCHF5.</text>
</comment>
<comment type="similarity">
    <text evidence="4">Belongs to the FIS1 family.</text>
</comment>